<dbReference type="EC" id="2.7.11.22"/>
<dbReference type="EMBL" id="X64314">
    <property type="protein sequence ID" value="CAA45595.1"/>
    <property type="molecule type" value="Genomic_DNA"/>
</dbReference>
<dbReference type="PIR" id="S19209">
    <property type="entry name" value="S19209"/>
</dbReference>
<dbReference type="SMR" id="P38973"/>
<dbReference type="OMA" id="YLYQITR"/>
<dbReference type="BRENDA" id="2.7.11.22">
    <property type="organism ID" value="6520"/>
</dbReference>
<dbReference type="GO" id="GO:0005741">
    <property type="term" value="C:mitochondrial outer membrane"/>
    <property type="evidence" value="ECO:0000314"/>
    <property type="project" value="GeneDB"/>
</dbReference>
<dbReference type="GO" id="GO:0005739">
    <property type="term" value="C:mitochondrion"/>
    <property type="evidence" value="ECO:0000314"/>
    <property type="project" value="GeneDB"/>
</dbReference>
<dbReference type="GO" id="GO:0005634">
    <property type="term" value="C:nucleus"/>
    <property type="evidence" value="ECO:0007669"/>
    <property type="project" value="TreeGrafter"/>
</dbReference>
<dbReference type="GO" id="GO:0005524">
    <property type="term" value="F:ATP binding"/>
    <property type="evidence" value="ECO:0000255"/>
    <property type="project" value="GeneDB"/>
</dbReference>
<dbReference type="GO" id="GO:0004693">
    <property type="term" value="F:cyclin-dependent protein serine/threonine kinase activity"/>
    <property type="evidence" value="ECO:0007669"/>
    <property type="project" value="UniProtKB-EC"/>
</dbReference>
<dbReference type="GO" id="GO:0106310">
    <property type="term" value="F:protein serine kinase activity"/>
    <property type="evidence" value="ECO:0007669"/>
    <property type="project" value="RHEA"/>
</dbReference>
<dbReference type="GO" id="GO:0004674">
    <property type="term" value="F:protein serine/threonine kinase activity"/>
    <property type="evidence" value="ECO:0000255"/>
    <property type="project" value="GeneDB"/>
</dbReference>
<dbReference type="GO" id="GO:0000278">
    <property type="term" value="P:mitotic cell cycle"/>
    <property type="evidence" value="ECO:0000304"/>
    <property type="project" value="GeneDB"/>
</dbReference>
<dbReference type="GO" id="GO:0006468">
    <property type="term" value="P:protein phosphorylation"/>
    <property type="evidence" value="ECO:0000255"/>
    <property type="project" value="GeneDB"/>
</dbReference>
<dbReference type="CDD" id="cd07829">
    <property type="entry name" value="STKc_CDK_like"/>
    <property type="match status" value="1"/>
</dbReference>
<dbReference type="FunFam" id="1.10.510.10:FF:000524">
    <property type="entry name" value="Cell division protein kinase 2"/>
    <property type="match status" value="1"/>
</dbReference>
<dbReference type="FunFam" id="3.30.200.20:FF:000375">
    <property type="entry name" value="Cell division related protein kinase 2"/>
    <property type="match status" value="1"/>
</dbReference>
<dbReference type="Gene3D" id="3.30.200.20">
    <property type="entry name" value="Phosphorylase Kinase, domain 1"/>
    <property type="match status" value="1"/>
</dbReference>
<dbReference type="Gene3D" id="1.10.510.10">
    <property type="entry name" value="Transferase(Phosphotransferase) domain 1"/>
    <property type="match status" value="1"/>
</dbReference>
<dbReference type="InterPro" id="IPR050108">
    <property type="entry name" value="CDK"/>
</dbReference>
<dbReference type="InterPro" id="IPR011009">
    <property type="entry name" value="Kinase-like_dom_sf"/>
</dbReference>
<dbReference type="InterPro" id="IPR000719">
    <property type="entry name" value="Prot_kinase_dom"/>
</dbReference>
<dbReference type="InterPro" id="IPR017441">
    <property type="entry name" value="Protein_kinase_ATP_BS"/>
</dbReference>
<dbReference type="InterPro" id="IPR008271">
    <property type="entry name" value="Ser/Thr_kinase_AS"/>
</dbReference>
<dbReference type="PANTHER" id="PTHR24056">
    <property type="entry name" value="CELL DIVISION PROTEIN KINASE"/>
    <property type="match status" value="1"/>
</dbReference>
<dbReference type="PANTHER" id="PTHR24056:SF46">
    <property type="entry name" value="CYCLIN-DEPENDENT KINASE 5"/>
    <property type="match status" value="1"/>
</dbReference>
<dbReference type="Pfam" id="PF00069">
    <property type="entry name" value="Pkinase"/>
    <property type="match status" value="1"/>
</dbReference>
<dbReference type="SMART" id="SM00220">
    <property type="entry name" value="S_TKc"/>
    <property type="match status" value="1"/>
</dbReference>
<dbReference type="SUPFAM" id="SSF56112">
    <property type="entry name" value="Protein kinase-like (PK-like)"/>
    <property type="match status" value="1"/>
</dbReference>
<dbReference type="PROSITE" id="PS00107">
    <property type="entry name" value="PROTEIN_KINASE_ATP"/>
    <property type="match status" value="1"/>
</dbReference>
<dbReference type="PROSITE" id="PS50011">
    <property type="entry name" value="PROTEIN_KINASE_DOM"/>
    <property type="match status" value="1"/>
</dbReference>
<dbReference type="PROSITE" id="PS00108">
    <property type="entry name" value="PROTEIN_KINASE_ST"/>
    <property type="match status" value="1"/>
</dbReference>
<proteinExistence type="inferred from homology"/>
<name>CC2H1_TRYBB</name>
<organism>
    <name type="scientific">Trypanosoma brucei brucei</name>
    <dbReference type="NCBI Taxonomy" id="5702"/>
    <lineage>
        <taxon>Eukaryota</taxon>
        <taxon>Discoba</taxon>
        <taxon>Euglenozoa</taxon>
        <taxon>Kinetoplastea</taxon>
        <taxon>Metakinetoplastina</taxon>
        <taxon>Trypanosomatida</taxon>
        <taxon>Trypanosomatidae</taxon>
        <taxon>Trypanosoma</taxon>
    </lineage>
</organism>
<feature type="chain" id="PRO_0000085706" description="Cell division control protein 2 homolog 1">
    <location>
        <begin position="1"/>
        <end position="301"/>
    </location>
</feature>
<feature type="domain" description="Protein kinase" evidence="2">
    <location>
        <begin position="5"/>
        <end position="297"/>
    </location>
</feature>
<feature type="active site" description="Proton acceptor" evidence="2 3">
    <location>
        <position position="127"/>
    </location>
</feature>
<feature type="binding site" evidence="2">
    <location>
        <begin position="11"/>
        <end position="19"/>
    </location>
    <ligand>
        <name>ATP</name>
        <dbReference type="ChEBI" id="CHEBI:30616"/>
    </ligand>
</feature>
<feature type="binding site" evidence="2">
    <location>
        <position position="34"/>
    </location>
    <ligand>
        <name>ATP</name>
        <dbReference type="ChEBI" id="CHEBI:30616"/>
    </ligand>
</feature>
<feature type="modified residue" description="Phosphoserine" evidence="1">
    <location>
        <position position="15"/>
    </location>
</feature>
<feature type="modified residue" description="Phosphotyrosine" evidence="1">
    <location>
        <position position="16"/>
    </location>
</feature>
<feature type="modified residue" description="Phosphothreonine; by CAK" evidence="1">
    <location>
        <position position="160"/>
    </location>
</feature>
<gene>
    <name type="primary">CRK1</name>
    <name type="synonym">KIN1</name>
</gene>
<comment type="function">
    <text>Probably involved in the control of the cell cycle.</text>
</comment>
<comment type="catalytic activity">
    <reaction>
        <text>L-seryl-[protein] + ATP = O-phospho-L-seryl-[protein] + ADP + H(+)</text>
        <dbReference type="Rhea" id="RHEA:17989"/>
        <dbReference type="Rhea" id="RHEA-COMP:9863"/>
        <dbReference type="Rhea" id="RHEA-COMP:11604"/>
        <dbReference type="ChEBI" id="CHEBI:15378"/>
        <dbReference type="ChEBI" id="CHEBI:29999"/>
        <dbReference type="ChEBI" id="CHEBI:30616"/>
        <dbReference type="ChEBI" id="CHEBI:83421"/>
        <dbReference type="ChEBI" id="CHEBI:456216"/>
        <dbReference type="EC" id="2.7.11.22"/>
    </reaction>
</comment>
<comment type="catalytic activity">
    <reaction>
        <text>L-threonyl-[protein] + ATP = O-phospho-L-threonyl-[protein] + ADP + H(+)</text>
        <dbReference type="Rhea" id="RHEA:46608"/>
        <dbReference type="Rhea" id="RHEA-COMP:11060"/>
        <dbReference type="Rhea" id="RHEA-COMP:11605"/>
        <dbReference type="ChEBI" id="CHEBI:15378"/>
        <dbReference type="ChEBI" id="CHEBI:30013"/>
        <dbReference type="ChEBI" id="CHEBI:30616"/>
        <dbReference type="ChEBI" id="CHEBI:61977"/>
        <dbReference type="ChEBI" id="CHEBI:456216"/>
        <dbReference type="EC" id="2.7.11.22"/>
    </reaction>
</comment>
<comment type="activity regulation">
    <text evidence="1">Phosphorylation at Ser-15 or Tyr-16 inactivates the enzyme, while phosphorylation at Thr-160 activates it.</text>
</comment>
<comment type="subunit">
    <text evidence="1">Forms a stable but non-covalent complex with a regulatory subunit and with a cyclin.</text>
</comment>
<comment type="similarity">
    <text evidence="4">Belongs to the protein kinase superfamily. CMGC Ser/Thr protein kinase family. CDC2/CDKX subfamily.</text>
</comment>
<reference key="1">
    <citation type="journal article" date="1995" name="Gene">
        <title>A family of trypanosome cdc2-related protein kinases.</title>
        <authorList>
            <person name="Mottram J."/>
            <person name="Smith G."/>
        </authorList>
    </citation>
    <scope>NUCLEOTIDE SEQUENCE [GENOMIC DNA]</scope>
    <source>
        <strain>ISTAT</strain>
    </source>
</reference>
<protein>
    <recommendedName>
        <fullName>Cell division control protein 2 homolog 1</fullName>
        <ecNumber>2.7.11.22</ecNumber>
    </recommendedName>
</protein>
<sequence length="301" mass="34351">MGSRYERLQKIGEGSYGVVFRARDVTTGTIVAVKRIRLEKEEEGVPCTAIREISILKELRHENIVRLLDVCHSEKRLTLVFECMEMDLKKYMDHVGGDLDAGTIQEFMRSLLSGVRFCHERNVLHRDLKPPNLLISREKELKLADFGLGRAFGIPVKKFTQEVVTLWYRSPDVLLGSTQYGTPVDIWSVGCIFAEMAIGAPLFTGKNDADQLLRIFQFLGTPNRQVWPSMDTYPNSSNMLSRPEFQQTLAATCEEQFQTNPAYAKLGPQGIDLLRWLLRYEPSERLTAAQALEHPYFSVEF</sequence>
<keyword id="KW-0067">ATP-binding</keyword>
<keyword id="KW-0418">Kinase</keyword>
<keyword id="KW-0547">Nucleotide-binding</keyword>
<keyword id="KW-0597">Phosphoprotein</keyword>
<keyword id="KW-0723">Serine/threonine-protein kinase</keyword>
<keyword id="KW-0808">Transferase</keyword>
<accession>P38973</accession>
<evidence type="ECO:0000250" key="1"/>
<evidence type="ECO:0000255" key="2">
    <source>
        <dbReference type="PROSITE-ProRule" id="PRU00159"/>
    </source>
</evidence>
<evidence type="ECO:0000255" key="3">
    <source>
        <dbReference type="PROSITE-ProRule" id="PRU10027"/>
    </source>
</evidence>
<evidence type="ECO:0000305" key="4"/>